<accession>A6UW70</accession>
<gene>
    <name type="ordered locus">Maeo_1165</name>
</gene>
<feature type="chain" id="PRO_0000350679" description="Geranylgeranylglyceryl phosphate synthase">
    <location>
        <begin position="1"/>
        <end position="248"/>
    </location>
</feature>
<feature type="binding site" evidence="1">
    <location>
        <position position="25"/>
    </location>
    <ligand>
        <name>Mg(2+)</name>
        <dbReference type="ChEBI" id="CHEBI:18420"/>
    </ligand>
</feature>
<feature type="binding site" evidence="1">
    <location>
        <position position="50"/>
    </location>
    <ligand>
        <name>Mg(2+)</name>
        <dbReference type="ChEBI" id="CHEBI:18420"/>
    </ligand>
</feature>
<feature type="binding site" evidence="1">
    <location>
        <begin position="170"/>
        <end position="176"/>
    </location>
    <ligand>
        <name>sn-glycerol 1-phosphate</name>
        <dbReference type="ChEBI" id="CHEBI:57685"/>
    </ligand>
</feature>
<feature type="binding site" evidence="1">
    <location>
        <begin position="201"/>
        <end position="202"/>
    </location>
    <ligand>
        <name>sn-glycerol 1-phosphate</name>
        <dbReference type="ChEBI" id="CHEBI:57685"/>
    </ligand>
</feature>
<feature type="binding site" evidence="1">
    <location>
        <begin position="223"/>
        <end position="224"/>
    </location>
    <ligand>
        <name>sn-glycerol 1-phosphate</name>
        <dbReference type="ChEBI" id="CHEBI:57685"/>
    </ligand>
</feature>
<sequence length="248" mass="26933">MFGKVEEKLNNVLKTEGALYFILIDPDEKNCLEIAEKVKDYADAIILGGSIGITNLDETTKQIKEIIGDIPIILFPGNVDGLTPYADAVFFMSFMNSNNTYWTTTAPTLGAITVKKYNLEPISMAYLGIEPIKRTAVGFVGEVNEIPQRKPEIAGMYCLSAKYFGMRWAYLEAGSGAELPVSNEIIGISKKLSGINIIVGGGIRTPETAYQKVLSGADAIVTGTLIEDNPDAVKEMRNAIKKAGIDKL</sequence>
<evidence type="ECO:0000255" key="1">
    <source>
        <dbReference type="HAMAP-Rule" id="MF_00112"/>
    </source>
</evidence>
<dbReference type="EC" id="2.5.1.41" evidence="1"/>
<dbReference type="EMBL" id="CP000743">
    <property type="protein sequence ID" value="ABR56742.1"/>
    <property type="molecule type" value="Genomic_DNA"/>
</dbReference>
<dbReference type="RefSeq" id="WP_011973874.1">
    <property type="nucleotide sequence ID" value="NC_009635.1"/>
</dbReference>
<dbReference type="SMR" id="A6UW70"/>
<dbReference type="STRING" id="419665.Maeo_1165"/>
<dbReference type="GeneID" id="5327712"/>
<dbReference type="KEGG" id="mae:Maeo_1165"/>
<dbReference type="eggNOG" id="arCOG01085">
    <property type="taxonomic scope" value="Archaea"/>
</dbReference>
<dbReference type="HOGENOM" id="CLU_068610_0_0_2"/>
<dbReference type="OrthoDB" id="7409at2157"/>
<dbReference type="UniPathway" id="UPA00940"/>
<dbReference type="Proteomes" id="UP000001106">
    <property type="component" value="Chromosome"/>
</dbReference>
<dbReference type="GO" id="GO:0005737">
    <property type="term" value="C:cytoplasm"/>
    <property type="evidence" value="ECO:0007669"/>
    <property type="project" value="UniProtKB-SubCell"/>
</dbReference>
<dbReference type="GO" id="GO:0000107">
    <property type="term" value="F:imidazoleglycerol-phosphate synthase activity"/>
    <property type="evidence" value="ECO:0007669"/>
    <property type="project" value="TreeGrafter"/>
</dbReference>
<dbReference type="GO" id="GO:0000287">
    <property type="term" value="F:magnesium ion binding"/>
    <property type="evidence" value="ECO:0007669"/>
    <property type="project" value="UniProtKB-UniRule"/>
</dbReference>
<dbReference type="GO" id="GO:0047294">
    <property type="term" value="F:phosphoglycerol geranylgeranyltransferase activity"/>
    <property type="evidence" value="ECO:0007669"/>
    <property type="project" value="UniProtKB-UniRule"/>
</dbReference>
<dbReference type="GO" id="GO:0046474">
    <property type="term" value="P:glycerophospholipid biosynthetic process"/>
    <property type="evidence" value="ECO:0007669"/>
    <property type="project" value="UniProtKB-UniRule"/>
</dbReference>
<dbReference type="CDD" id="cd02812">
    <property type="entry name" value="PcrB_like"/>
    <property type="match status" value="1"/>
</dbReference>
<dbReference type="Gene3D" id="3.20.20.390">
    <property type="entry name" value="FMN-linked oxidoreductases"/>
    <property type="match status" value="1"/>
</dbReference>
<dbReference type="HAMAP" id="MF_00112">
    <property type="entry name" value="GGGP_HepGP_synthase"/>
    <property type="match status" value="1"/>
</dbReference>
<dbReference type="InterPro" id="IPR038597">
    <property type="entry name" value="GGGP/HepGP_synthase_sf"/>
</dbReference>
<dbReference type="InterPro" id="IPR008205">
    <property type="entry name" value="GGGP_HepGP_synthase"/>
</dbReference>
<dbReference type="InterPro" id="IPR010946">
    <property type="entry name" value="GGGP_synth"/>
</dbReference>
<dbReference type="InterPro" id="IPR050064">
    <property type="entry name" value="IGPS_HisA/HisF"/>
</dbReference>
<dbReference type="NCBIfam" id="TIGR01769">
    <property type="entry name" value="GGGP"/>
    <property type="match status" value="1"/>
</dbReference>
<dbReference type="NCBIfam" id="TIGR01768">
    <property type="entry name" value="GGGP-family"/>
    <property type="match status" value="1"/>
</dbReference>
<dbReference type="NCBIfam" id="NF003198">
    <property type="entry name" value="PRK04169.1-2"/>
    <property type="match status" value="1"/>
</dbReference>
<dbReference type="NCBIfam" id="NF003201">
    <property type="entry name" value="PRK04169.1-5"/>
    <property type="match status" value="1"/>
</dbReference>
<dbReference type="PANTHER" id="PTHR21235:SF22">
    <property type="entry name" value="GERANYLGERANYLGLYCERYL PHOSPHATE SYNTHASE"/>
    <property type="match status" value="1"/>
</dbReference>
<dbReference type="PANTHER" id="PTHR21235">
    <property type="entry name" value="IMIDAZOLE GLYCEROL PHOSPHATE SYNTHASE SUBUNIT HISF/H IGP SYNTHASE SUBUNIT HISF/H"/>
    <property type="match status" value="1"/>
</dbReference>
<dbReference type="Pfam" id="PF01884">
    <property type="entry name" value="PcrB"/>
    <property type="match status" value="1"/>
</dbReference>
<dbReference type="SUPFAM" id="SSF51395">
    <property type="entry name" value="FMN-linked oxidoreductases"/>
    <property type="match status" value="1"/>
</dbReference>
<keyword id="KW-0963">Cytoplasm</keyword>
<keyword id="KW-0444">Lipid biosynthesis</keyword>
<keyword id="KW-0443">Lipid metabolism</keyword>
<keyword id="KW-0460">Magnesium</keyword>
<keyword id="KW-0479">Metal-binding</keyword>
<keyword id="KW-0594">Phospholipid biosynthesis</keyword>
<keyword id="KW-1208">Phospholipid metabolism</keyword>
<keyword id="KW-0808">Transferase</keyword>
<proteinExistence type="inferred from homology"/>
<organism>
    <name type="scientific">Methanococcus aeolicus (strain ATCC BAA-1280 / DSM 17508 / OCM 812 / Nankai-3)</name>
    <dbReference type="NCBI Taxonomy" id="419665"/>
    <lineage>
        <taxon>Archaea</taxon>
        <taxon>Methanobacteriati</taxon>
        <taxon>Methanobacteriota</taxon>
        <taxon>Methanomada group</taxon>
        <taxon>Methanococci</taxon>
        <taxon>Methanococcales</taxon>
        <taxon>Methanococcaceae</taxon>
        <taxon>Methanococcus</taxon>
    </lineage>
</organism>
<comment type="function">
    <text evidence="1">Prenyltransferase that catalyzes the transfer of the geranylgeranyl moiety of geranylgeranyl diphosphate (GGPP) to the C3 hydroxyl of sn-glycerol-1-phosphate (G1P). This reaction is the first ether-bond-formation step in the biosynthesis of archaeal membrane lipids.</text>
</comment>
<comment type="catalytic activity">
    <reaction evidence="1">
        <text>sn-glycerol 1-phosphate + (2E,6E,10E)-geranylgeranyl diphosphate = sn-3-O-(geranylgeranyl)glycerol 1-phosphate + diphosphate</text>
        <dbReference type="Rhea" id="RHEA:23404"/>
        <dbReference type="ChEBI" id="CHEBI:33019"/>
        <dbReference type="ChEBI" id="CHEBI:57677"/>
        <dbReference type="ChEBI" id="CHEBI:57685"/>
        <dbReference type="ChEBI" id="CHEBI:58756"/>
        <dbReference type="EC" id="2.5.1.41"/>
    </reaction>
</comment>
<comment type="cofactor">
    <cofactor evidence="1">
        <name>Mg(2+)</name>
        <dbReference type="ChEBI" id="CHEBI:18420"/>
    </cofactor>
</comment>
<comment type="pathway">
    <text evidence="1">Membrane lipid metabolism; glycerophospholipid metabolism.</text>
</comment>
<comment type="subcellular location">
    <subcellularLocation>
        <location evidence="1">Cytoplasm</location>
    </subcellularLocation>
</comment>
<comment type="similarity">
    <text evidence="1">Belongs to the GGGP/HepGP synthase family. Group II subfamily.</text>
</comment>
<protein>
    <recommendedName>
        <fullName evidence="1">Geranylgeranylglyceryl phosphate synthase</fullName>
        <shortName evidence="1">GGGP synthase</shortName>
        <shortName evidence="1">GGGPS</shortName>
        <ecNumber evidence="1">2.5.1.41</ecNumber>
    </recommendedName>
    <alternativeName>
        <fullName evidence="1">(S)-3-O-geranylgeranylglyceryl phosphate synthase</fullName>
    </alternativeName>
    <alternativeName>
        <fullName evidence="1">Phosphoglycerol geranylgeranyltransferase</fullName>
    </alternativeName>
</protein>
<reference key="1">
    <citation type="submission" date="2007-06" db="EMBL/GenBank/DDBJ databases">
        <title>Complete sequence of Methanococcus aeolicus Nankai-3.</title>
        <authorList>
            <consortium name="US DOE Joint Genome Institute"/>
            <person name="Copeland A."/>
            <person name="Lucas S."/>
            <person name="Lapidus A."/>
            <person name="Barry K."/>
            <person name="Glavina del Rio T."/>
            <person name="Dalin E."/>
            <person name="Tice H."/>
            <person name="Pitluck S."/>
            <person name="Chain P."/>
            <person name="Malfatti S."/>
            <person name="Shin M."/>
            <person name="Vergez L."/>
            <person name="Schmutz J."/>
            <person name="Larimer F."/>
            <person name="Land M."/>
            <person name="Hauser L."/>
            <person name="Kyrpides N."/>
            <person name="Lykidis A."/>
            <person name="Sieprawska-Lupa M."/>
            <person name="Whitman W.B."/>
            <person name="Richardson P."/>
        </authorList>
    </citation>
    <scope>NUCLEOTIDE SEQUENCE [LARGE SCALE GENOMIC DNA]</scope>
    <source>
        <strain>ATCC BAA-1280 / DSM 17508 / OCM 812 / Nankai-3</strain>
    </source>
</reference>
<name>GGGPS_META3</name>